<sequence>MSKLVLVLNCGSSSLKFAVVDAQSGEQHLSGLAECLHLPEARIKWKLDGKHEAQLGEGAAHDEALSFIVETILASKPELAAQLKAIGHRVVHGGEQFTQSALIDDAVLKGIEDCAALAPLHNPAHIIGIKAAQKAFPELKNVAVFDTAFHQTMPEEAYLYALPYNLYKEHGIRRYGMHGTSHLFIAREAAERLGKPANELNIINCHLGNGASVCAIKNGQSVDTSMGLTPLEGLVMGTRCGDIDPAIIFHLHDTLGYSVEKINTMLTKESGLLGLTEVTSDCRFVEDNYGQKEEATRAMDVFCHRLAKYVAGYTASLDGRLDAITFTGGIGENSAPIREMVLNRLAIFGITVDSAANLKARFGGEGVITTADSRIPAMVIATNEELVIAEDTARLTNI</sequence>
<gene>
    <name evidence="1" type="primary">ackA1</name>
    <name type="ordered locus">VC_1098</name>
</gene>
<protein>
    <recommendedName>
        <fullName evidence="1">Acetate kinase 1</fullName>
        <ecNumber evidence="1">2.7.2.1</ecNumber>
    </recommendedName>
    <alternativeName>
        <fullName evidence="1">Acetokinase 1</fullName>
    </alternativeName>
</protein>
<accession>Q9KT07</accession>
<feature type="chain" id="PRO_0000107635" description="Acetate kinase 1">
    <location>
        <begin position="1"/>
        <end position="398"/>
    </location>
</feature>
<feature type="active site" description="Proton donor/acceptor" evidence="1">
    <location>
        <position position="146"/>
    </location>
</feature>
<feature type="binding site" evidence="1">
    <location>
        <position position="9"/>
    </location>
    <ligand>
        <name>Mg(2+)</name>
        <dbReference type="ChEBI" id="CHEBI:18420"/>
    </ligand>
</feature>
<feature type="binding site" evidence="1">
    <location>
        <position position="16"/>
    </location>
    <ligand>
        <name>ATP</name>
        <dbReference type="ChEBI" id="CHEBI:30616"/>
    </ligand>
</feature>
<feature type="binding site" evidence="1">
    <location>
        <position position="89"/>
    </location>
    <ligand>
        <name>substrate</name>
    </ligand>
</feature>
<feature type="binding site" evidence="1">
    <location>
        <begin position="206"/>
        <end position="210"/>
    </location>
    <ligand>
        <name>ATP</name>
        <dbReference type="ChEBI" id="CHEBI:30616"/>
    </ligand>
</feature>
<feature type="binding site" evidence="1">
    <location>
        <begin position="281"/>
        <end position="283"/>
    </location>
    <ligand>
        <name>ATP</name>
        <dbReference type="ChEBI" id="CHEBI:30616"/>
    </ligand>
</feature>
<feature type="binding site" evidence="1">
    <location>
        <begin position="329"/>
        <end position="333"/>
    </location>
    <ligand>
        <name>ATP</name>
        <dbReference type="ChEBI" id="CHEBI:30616"/>
    </ligand>
</feature>
<feature type="binding site" evidence="1">
    <location>
        <position position="384"/>
    </location>
    <ligand>
        <name>Mg(2+)</name>
        <dbReference type="ChEBI" id="CHEBI:18420"/>
    </ligand>
</feature>
<feature type="site" description="Transition state stabilizer" evidence="1">
    <location>
        <position position="178"/>
    </location>
</feature>
<feature type="site" description="Transition state stabilizer" evidence="1">
    <location>
        <position position="239"/>
    </location>
</feature>
<keyword id="KW-0067">ATP-binding</keyword>
<keyword id="KW-0963">Cytoplasm</keyword>
<keyword id="KW-0418">Kinase</keyword>
<keyword id="KW-0460">Magnesium</keyword>
<keyword id="KW-0479">Metal-binding</keyword>
<keyword id="KW-0547">Nucleotide-binding</keyword>
<keyword id="KW-1185">Reference proteome</keyword>
<keyword id="KW-0808">Transferase</keyword>
<proteinExistence type="inferred from homology"/>
<comment type="function">
    <text evidence="1">Catalyzes the formation of acetyl phosphate from acetate and ATP. Can also catalyze the reverse reaction.</text>
</comment>
<comment type="catalytic activity">
    <reaction evidence="1">
        <text>acetate + ATP = acetyl phosphate + ADP</text>
        <dbReference type="Rhea" id="RHEA:11352"/>
        <dbReference type="ChEBI" id="CHEBI:22191"/>
        <dbReference type="ChEBI" id="CHEBI:30089"/>
        <dbReference type="ChEBI" id="CHEBI:30616"/>
        <dbReference type="ChEBI" id="CHEBI:456216"/>
        <dbReference type="EC" id="2.7.2.1"/>
    </reaction>
</comment>
<comment type="cofactor">
    <cofactor evidence="1">
        <name>Mg(2+)</name>
        <dbReference type="ChEBI" id="CHEBI:18420"/>
    </cofactor>
    <cofactor evidence="1">
        <name>Mn(2+)</name>
        <dbReference type="ChEBI" id="CHEBI:29035"/>
    </cofactor>
    <text evidence="1">Mg(2+). Can also accept Mn(2+).</text>
</comment>
<comment type="pathway">
    <text evidence="1">Metabolic intermediate biosynthesis; acetyl-CoA biosynthesis; acetyl-CoA from acetate: step 1/2.</text>
</comment>
<comment type="subunit">
    <text evidence="1">Homodimer.</text>
</comment>
<comment type="subcellular location">
    <subcellularLocation>
        <location evidence="1">Cytoplasm</location>
    </subcellularLocation>
</comment>
<comment type="similarity">
    <text evidence="1">Belongs to the acetokinase family.</text>
</comment>
<dbReference type="EC" id="2.7.2.1" evidence="1"/>
<dbReference type="EMBL" id="AE003852">
    <property type="protein sequence ID" value="AAF94257.1"/>
    <property type="molecule type" value="Genomic_DNA"/>
</dbReference>
<dbReference type="PIR" id="A82243">
    <property type="entry name" value="A82243"/>
</dbReference>
<dbReference type="RefSeq" id="NP_230743.1">
    <property type="nucleotide sequence ID" value="NC_002505.1"/>
</dbReference>
<dbReference type="RefSeq" id="WP_000041130.1">
    <property type="nucleotide sequence ID" value="NZ_LT906614.1"/>
</dbReference>
<dbReference type="SMR" id="Q9KT07"/>
<dbReference type="STRING" id="243277.VC_1098"/>
<dbReference type="DNASU" id="2614368"/>
<dbReference type="EnsemblBacteria" id="AAF94257">
    <property type="protein sequence ID" value="AAF94257"/>
    <property type="gene ID" value="VC_1098"/>
</dbReference>
<dbReference type="KEGG" id="vch:VC_1098"/>
<dbReference type="PATRIC" id="fig|243277.26.peg.1048"/>
<dbReference type="eggNOG" id="COG0282">
    <property type="taxonomic scope" value="Bacteria"/>
</dbReference>
<dbReference type="HOGENOM" id="CLU_020352_0_1_6"/>
<dbReference type="UniPathway" id="UPA00340">
    <property type="reaction ID" value="UER00458"/>
</dbReference>
<dbReference type="Proteomes" id="UP000000584">
    <property type="component" value="Chromosome 1"/>
</dbReference>
<dbReference type="GO" id="GO:0005829">
    <property type="term" value="C:cytosol"/>
    <property type="evidence" value="ECO:0000318"/>
    <property type="project" value="GO_Central"/>
</dbReference>
<dbReference type="GO" id="GO:0008776">
    <property type="term" value="F:acetate kinase activity"/>
    <property type="evidence" value="ECO:0000318"/>
    <property type="project" value="GO_Central"/>
</dbReference>
<dbReference type="GO" id="GO:0005524">
    <property type="term" value="F:ATP binding"/>
    <property type="evidence" value="ECO:0007669"/>
    <property type="project" value="UniProtKB-KW"/>
</dbReference>
<dbReference type="GO" id="GO:0000287">
    <property type="term" value="F:magnesium ion binding"/>
    <property type="evidence" value="ECO:0007669"/>
    <property type="project" value="UniProtKB-UniRule"/>
</dbReference>
<dbReference type="GO" id="GO:0006083">
    <property type="term" value="P:acetate metabolic process"/>
    <property type="evidence" value="ECO:0000318"/>
    <property type="project" value="GO_Central"/>
</dbReference>
<dbReference type="GO" id="GO:0006085">
    <property type="term" value="P:acetyl-CoA biosynthetic process"/>
    <property type="evidence" value="ECO:0007669"/>
    <property type="project" value="UniProtKB-UniRule"/>
</dbReference>
<dbReference type="CDD" id="cd24010">
    <property type="entry name" value="ASKHA_NBD_AcK_PK"/>
    <property type="match status" value="1"/>
</dbReference>
<dbReference type="FunFam" id="3.30.420.40:FF:000041">
    <property type="entry name" value="Acetate kinase"/>
    <property type="match status" value="1"/>
</dbReference>
<dbReference type="FunFam" id="3.30.420.40:FF:000042">
    <property type="entry name" value="Acetate kinase"/>
    <property type="match status" value="1"/>
</dbReference>
<dbReference type="Gene3D" id="3.30.420.40">
    <property type="match status" value="2"/>
</dbReference>
<dbReference type="HAMAP" id="MF_00020">
    <property type="entry name" value="Acetate_kinase"/>
    <property type="match status" value="1"/>
</dbReference>
<dbReference type="InterPro" id="IPR004372">
    <property type="entry name" value="Ac/propionate_kinase"/>
</dbReference>
<dbReference type="InterPro" id="IPR000890">
    <property type="entry name" value="Aliphatic_acid_kin_short-chain"/>
</dbReference>
<dbReference type="InterPro" id="IPR023865">
    <property type="entry name" value="Aliphatic_acid_kinase_CS"/>
</dbReference>
<dbReference type="InterPro" id="IPR043129">
    <property type="entry name" value="ATPase_NBD"/>
</dbReference>
<dbReference type="NCBIfam" id="TIGR00016">
    <property type="entry name" value="ackA"/>
    <property type="match status" value="1"/>
</dbReference>
<dbReference type="PANTHER" id="PTHR21060">
    <property type="entry name" value="ACETATE KINASE"/>
    <property type="match status" value="1"/>
</dbReference>
<dbReference type="PANTHER" id="PTHR21060:SF21">
    <property type="entry name" value="ACETATE KINASE"/>
    <property type="match status" value="1"/>
</dbReference>
<dbReference type="Pfam" id="PF00871">
    <property type="entry name" value="Acetate_kinase"/>
    <property type="match status" value="1"/>
</dbReference>
<dbReference type="PIRSF" id="PIRSF000722">
    <property type="entry name" value="Acetate_prop_kin"/>
    <property type="match status" value="1"/>
</dbReference>
<dbReference type="PRINTS" id="PR00471">
    <property type="entry name" value="ACETATEKNASE"/>
</dbReference>
<dbReference type="SUPFAM" id="SSF53067">
    <property type="entry name" value="Actin-like ATPase domain"/>
    <property type="match status" value="2"/>
</dbReference>
<dbReference type="PROSITE" id="PS01075">
    <property type="entry name" value="ACETATE_KINASE_1"/>
    <property type="match status" value="1"/>
</dbReference>
<dbReference type="PROSITE" id="PS01076">
    <property type="entry name" value="ACETATE_KINASE_2"/>
    <property type="match status" value="1"/>
</dbReference>
<reference key="1">
    <citation type="journal article" date="2000" name="Nature">
        <title>DNA sequence of both chromosomes of the cholera pathogen Vibrio cholerae.</title>
        <authorList>
            <person name="Heidelberg J.F."/>
            <person name="Eisen J.A."/>
            <person name="Nelson W.C."/>
            <person name="Clayton R.A."/>
            <person name="Gwinn M.L."/>
            <person name="Dodson R.J."/>
            <person name="Haft D.H."/>
            <person name="Hickey E.K."/>
            <person name="Peterson J.D."/>
            <person name="Umayam L.A."/>
            <person name="Gill S.R."/>
            <person name="Nelson K.E."/>
            <person name="Read T.D."/>
            <person name="Tettelin H."/>
            <person name="Richardson D.L."/>
            <person name="Ermolaeva M.D."/>
            <person name="Vamathevan J.J."/>
            <person name="Bass S."/>
            <person name="Qin H."/>
            <person name="Dragoi I."/>
            <person name="Sellers P."/>
            <person name="McDonald L.A."/>
            <person name="Utterback T.R."/>
            <person name="Fleischmann R.D."/>
            <person name="Nierman W.C."/>
            <person name="White O."/>
            <person name="Salzberg S.L."/>
            <person name="Smith H.O."/>
            <person name="Colwell R.R."/>
            <person name="Mekalanos J.J."/>
            <person name="Venter J.C."/>
            <person name="Fraser C.M."/>
        </authorList>
    </citation>
    <scope>NUCLEOTIDE SEQUENCE [LARGE SCALE GENOMIC DNA]</scope>
    <source>
        <strain>ATCC 39315 / El Tor Inaba N16961</strain>
    </source>
</reference>
<organism>
    <name type="scientific">Vibrio cholerae serotype O1 (strain ATCC 39315 / El Tor Inaba N16961)</name>
    <dbReference type="NCBI Taxonomy" id="243277"/>
    <lineage>
        <taxon>Bacteria</taxon>
        <taxon>Pseudomonadati</taxon>
        <taxon>Pseudomonadota</taxon>
        <taxon>Gammaproteobacteria</taxon>
        <taxon>Vibrionales</taxon>
        <taxon>Vibrionaceae</taxon>
        <taxon>Vibrio</taxon>
    </lineage>
</organism>
<evidence type="ECO:0000255" key="1">
    <source>
        <dbReference type="HAMAP-Rule" id="MF_00020"/>
    </source>
</evidence>
<name>ACKA1_VIBCH</name>